<reference key="1">
    <citation type="journal article" date="2011" name="J. Bacteriol.">
        <title>Comparative genomics of 28 Salmonella enterica isolates: evidence for CRISPR-mediated adaptive sublineage evolution.</title>
        <authorList>
            <person name="Fricke W.F."/>
            <person name="Mammel M.K."/>
            <person name="McDermott P.F."/>
            <person name="Tartera C."/>
            <person name="White D.G."/>
            <person name="Leclerc J.E."/>
            <person name="Ravel J."/>
            <person name="Cebula T.A."/>
        </authorList>
    </citation>
    <scope>NUCLEOTIDE SEQUENCE [LARGE SCALE GENOMIC DNA]</scope>
    <source>
        <strain>SL254</strain>
    </source>
</reference>
<organism>
    <name type="scientific">Salmonella newport (strain SL254)</name>
    <dbReference type="NCBI Taxonomy" id="423368"/>
    <lineage>
        <taxon>Bacteria</taxon>
        <taxon>Pseudomonadati</taxon>
        <taxon>Pseudomonadota</taxon>
        <taxon>Gammaproteobacteria</taxon>
        <taxon>Enterobacterales</taxon>
        <taxon>Enterobacteriaceae</taxon>
        <taxon>Salmonella</taxon>
    </lineage>
</organism>
<evidence type="ECO:0000255" key="1">
    <source>
        <dbReference type="HAMAP-Rule" id="MF_00178"/>
    </source>
</evidence>
<sequence>MNIIKANVAAPDARVAITIARFNQFINDSLLDGAVDALTRIGQVKDDNITVVWVPGAYELPLATEALAKSGKYDAVVALGTVIRGGTAHFEYVAGGASNGLASVAQDSGVPVAFGVLTTESIEQAIERAGTKAGNKGAEAALTALEMINVLKAIKA</sequence>
<feature type="chain" id="PRO_1000098226" description="6,7-dimethyl-8-ribityllumazine synthase">
    <location>
        <begin position="1"/>
        <end position="156"/>
    </location>
</feature>
<feature type="active site" description="Proton donor" evidence="1">
    <location>
        <position position="89"/>
    </location>
</feature>
<feature type="binding site" evidence="1">
    <location>
        <position position="22"/>
    </location>
    <ligand>
        <name>5-amino-6-(D-ribitylamino)uracil</name>
        <dbReference type="ChEBI" id="CHEBI:15934"/>
    </ligand>
</feature>
<feature type="binding site" evidence="1">
    <location>
        <begin position="57"/>
        <end position="59"/>
    </location>
    <ligand>
        <name>5-amino-6-(D-ribitylamino)uracil</name>
        <dbReference type="ChEBI" id="CHEBI:15934"/>
    </ligand>
</feature>
<feature type="binding site" evidence="1">
    <location>
        <begin position="81"/>
        <end position="83"/>
    </location>
    <ligand>
        <name>5-amino-6-(D-ribitylamino)uracil</name>
        <dbReference type="ChEBI" id="CHEBI:15934"/>
    </ligand>
</feature>
<feature type="binding site" evidence="1">
    <location>
        <begin position="86"/>
        <end position="87"/>
    </location>
    <ligand>
        <name>(2S)-2-hydroxy-3-oxobutyl phosphate</name>
        <dbReference type="ChEBI" id="CHEBI:58830"/>
    </ligand>
</feature>
<feature type="binding site" evidence="1">
    <location>
        <position position="114"/>
    </location>
    <ligand>
        <name>5-amino-6-(D-ribitylamino)uracil</name>
        <dbReference type="ChEBI" id="CHEBI:15934"/>
    </ligand>
</feature>
<feature type="binding site" evidence="1">
    <location>
        <position position="128"/>
    </location>
    <ligand>
        <name>(2S)-2-hydroxy-3-oxobutyl phosphate</name>
        <dbReference type="ChEBI" id="CHEBI:58830"/>
    </ligand>
</feature>
<dbReference type="EC" id="2.5.1.78" evidence="1"/>
<dbReference type="EMBL" id="CP001113">
    <property type="protein sequence ID" value="ACF61741.1"/>
    <property type="molecule type" value="Genomic_DNA"/>
</dbReference>
<dbReference type="SMR" id="B4SWQ9"/>
<dbReference type="KEGG" id="see:SNSL254_A0464"/>
<dbReference type="HOGENOM" id="CLU_089358_1_1_6"/>
<dbReference type="UniPathway" id="UPA00275">
    <property type="reaction ID" value="UER00404"/>
</dbReference>
<dbReference type="Proteomes" id="UP000008824">
    <property type="component" value="Chromosome"/>
</dbReference>
<dbReference type="GO" id="GO:0005829">
    <property type="term" value="C:cytosol"/>
    <property type="evidence" value="ECO:0007669"/>
    <property type="project" value="TreeGrafter"/>
</dbReference>
<dbReference type="GO" id="GO:0009349">
    <property type="term" value="C:riboflavin synthase complex"/>
    <property type="evidence" value="ECO:0007669"/>
    <property type="project" value="InterPro"/>
</dbReference>
<dbReference type="GO" id="GO:0000906">
    <property type="term" value="F:6,7-dimethyl-8-ribityllumazine synthase activity"/>
    <property type="evidence" value="ECO:0007669"/>
    <property type="project" value="UniProtKB-UniRule"/>
</dbReference>
<dbReference type="GO" id="GO:0009231">
    <property type="term" value="P:riboflavin biosynthetic process"/>
    <property type="evidence" value="ECO:0007669"/>
    <property type="project" value="UniProtKB-UniRule"/>
</dbReference>
<dbReference type="CDD" id="cd09209">
    <property type="entry name" value="Lumazine_synthase-I"/>
    <property type="match status" value="1"/>
</dbReference>
<dbReference type="FunFam" id="3.40.50.960:FF:000001">
    <property type="entry name" value="6,7-dimethyl-8-ribityllumazine synthase"/>
    <property type="match status" value="1"/>
</dbReference>
<dbReference type="Gene3D" id="3.40.50.960">
    <property type="entry name" value="Lumazine/riboflavin synthase"/>
    <property type="match status" value="1"/>
</dbReference>
<dbReference type="HAMAP" id="MF_00178">
    <property type="entry name" value="Lumazine_synth"/>
    <property type="match status" value="1"/>
</dbReference>
<dbReference type="InterPro" id="IPR034964">
    <property type="entry name" value="LS"/>
</dbReference>
<dbReference type="InterPro" id="IPR002180">
    <property type="entry name" value="LS/RS"/>
</dbReference>
<dbReference type="InterPro" id="IPR036467">
    <property type="entry name" value="LS/RS_sf"/>
</dbReference>
<dbReference type="NCBIfam" id="TIGR00114">
    <property type="entry name" value="lumazine-synth"/>
    <property type="match status" value="1"/>
</dbReference>
<dbReference type="NCBIfam" id="NF000812">
    <property type="entry name" value="PRK00061.1-4"/>
    <property type="match status" value="1"/>
</dbReference>
<dbReference type="PANTHER" id="PTHR21058:SF0">
    <property type="entry name" value="6,7-DIMETHYL-8-RIBITYLLUMAZINE SYNTHASE"/>
    <property type="match status" value="1"/>
</dbReference>
<dbReference type="PANTHER" id="PTHR21058">
    <property type="entry name" value="6,7-DIMETHYL-8-RIBITYLLUMAZINE SYNTHASE DMRL SYNTHASE LUMAZINE SYNTHASE"/>
    <property type="match status" value="1"/>
</dbReference>
<dbReference type="Pfam" id="PF00885">
    <property type="entry name" value="DMRL_synthase"/>
    <property type="match status" value="1"/>
</dbReference>
<dbReference type="SUPFAM" id="SSF52121">
    <property type="entry name" value="Lumazine synthase"/>
    <property type="match status" value="1"/>
</dbReference>
<proteinExistence type="inferred from homology"/>
<protein>
    <recommendedName>
        <fullName evidence="1">6,7-dimethyl-8-ribityllumazine synthase</fullName>
        <shortName evidence="1">DMRL synthase</shortName>
        <shortName evidence="1">LS</shortName>
        <shortName evidence="1">Lumazine synthase</shortName>
        <ecNumber evidence="1">2.5.1.78</ecNumber>
    </recommendedName>
</protein>
<comment type="function">
    <text evidence="1">Catalyzes the formation of 6,7-dimethyl-8-ribityllumazine by condensation of 5-amino-6-(D-ribitylamino)uracil with 3,4-dihydroxy-2-butanone 4-phosphate. This is the penultimate step in the biosynthesis of riboflavin.</text>
</comment>
<comment type="catalytic activity">
    <reaction evidence="1">
        <text>(2S)-2-hydroxy-3-oxobutyl phosphate + 5-amino-6-(D-ribitylamino)uracil = 6,7-dimethyl-8-(1-D-ribityl)lumazine + phosphate + 2 H2O + H(+)</text>
        <dbReference type="Rhea" id="RHEA:26152"/>
        <dbReference type="ChEBI" id="CHEBI:15377"/>
        <dbReference type="ChEBI" id="CHEBI:15378"/>
        <dbReference type="ChEBI" id="CHEBI:15934"/>
        <dbReference type="ChEBI" id="CHEBI:43474"/>
        <dbReference type="ChEBI" id="CHEBI:58201"/>
        <dbReference type="ChEBI" id="CHEBI:58830"/>
        <dbReference type="EC" id="2.5.1.78"/>
    </reaction>
</comment>
<comment type="pathway">
    <text evidence="1">Cofactor biosynthesis; riboflavin biosynthesis; riboflavin from 2-hydroxy-3-oxobutyl phosphate and 5-amino-6-(D-ribitylamino)uracil: step 1/2.</text>
</comment>
<comment type="subunit">
    <text evidence="1">Forms an icosahedral capsid composed of 60 subunits, arranged as a dodecamer of pentamers.</text>
</comment>
<comment type="similarity">
    <text evidence="1">Belongs to the DMRL synthase family.</text>
</comment>
<name>RISB_SALNS</name>
<accession>B4SWQ9</accession>
<gene>
    <name evidence="1" type="primary">ribH</name>
    <name type="ordered locus">SNSL254_A0464</name>
</gene>
<keyword id="KW-0686">Riboflavin biosynthesis</keyword>
<keyword id="KW-0808">Transferase</keyword>